<name>BL1S4_EREGS</name>
<comment type="function">
    <text evidence="1">Component of the biogenesis of lysosome-related organelles complex-1 (BLOC-1), a complex that is involved in endosomal cargo sorting.</text>
</comment>
<comment type="subunit">
    <text evidence="1">Component of the biogenesis of lysosome-related organelles complex-1 (BLOC-1).</text>
</comment>
<comment type="subcellular location">
    <subcellularLocation>
        <location evidence="1">Cytoplasm</location>
    </subcellularLocation>
    <text evidence="1">Punctate pattern.</text>
</comment>
<comment type="similarity">
    <text evidence="2">Belongs to the BLOC1S4 family.</text>
</comment>
<dbReference type="EMBL" id="AE016818">
    <property type="protein sequence ID" value="AAS52923.1"/>
    <property type="molecule type" value="Genomic_DNA"/>
</dbReference>
<dbReference type="RefSeq" id="NP_985099.1">
    <property type="nucleotide sequence ID" value="NM_210453.1"/>
</dbReference>
<dbReference type="SMR" id="Q756L2"/>
<dbReference type="FunCoup" id="Q756L2">
    <property type="interactions" value="33"/>
</dbReference>
<dbReference type="STRING" id="284811.Q756L2"/>
<dbReference type="EnsemblFungi" id="AAS52923">
    <property type="protein sequence ID" value="AAS52923"/>
    <property type="gene ID" value="AGOS_AER242C"/>
</dbReference>
<dbReference type="GeneID" id="4621309"/>
<dbReference type="KEGG" id="ago:AGOS_AER242C"/>
<dbReference type="eggNOG" id="ENOG502S4DQ">
    <property type="taxonomic scope" value="Eukaryota"/>
</dbReference>
<dbReference type="HOGENOM" id="CLU_141728_1_0_1"/>
<dbReference type="InParanoid" id="Q756L2"/>
<dbReference type="OMA" id="HFDMLDQ"/>
<dbReference type="OrthoDB" id="5424991at2759"/>
<dbReference type="Proteomes" id="UP000000591">
    <property type="component" value="Chromosome V"/>
</dbReference>
<dbReference type="GO" id="GO:0031083">
    <property type="term" value="C:BLOC-1 complex"/>
    <property type="evidence" value="ECO:0000318"/>
    <property type="project" value="GO_Central"/>
</dbReference>
<dbReference type="GO" id="GO:0005768">
    <property type="term" value="C:endosome"/>
    <property type="evidence" value="ECO:0007669"/>
    <property type="project" value="EnsemblFungi"/>
</dbReference>
<dbReference type="GO" id="GO:0007032">
    <property type="term" value="P:endosome organization"/>
    <property type="evidence" value="ECO:0000318"/>
    <property type="project" value="GO_Central"/>
</dbReference>
<dbReference type="GO" id="GO:0032880">
    <property type="term" value="P:regulation of protein localization"/>
    <property type="evidence" value="ECO:0007669"/>
    <property type="project" value="EnsemblFungi"/>
</dbReference>
<dbReference type="CDD" id="cd24144">
    <property type="entry name" value="BLOC1_CNL1"/>
    <property type="match status" value="1"/>
</dbReference>
<dbReference type="InterPro" id="IPR034455">
    <property type="entry name" value="CNL1"/>
</dbReference>
<dbReference type="PANTHER" id="PTHR39145">
    <property type="entry name" value="BIOGENESIS OF LYSOSOME-RELATED ORGANELLES COMPLEX 1 SUBUNIT CNL1"/>
    <property type="match status" value="1"/>
</dbReference>
<dbReference type="PANTHER" id="PTHR39145:SF1">
    <property type="entry name" value="BIOGENESIS OF LYSOSOME-RELATED ORGANELLES COMPLEX 1 SUBUNIT CNL1"/>
    <property type="match status" value="1"/>
</dbReference>
<evidence type="ECO:0000250" key="1"/>
<evidence type="ECO:0000305" key="2"/>
<organism>
    <name type="scientific">Eremothecium gossypii (strain ATCC 10895 / CBS 109.51 / FGSC 9923 / NRRL Y-1056)</name>
    <name type="common">Yeast</name>
    <name type="synonym">Ashbya gossypii</name>
    <dbReference type="NCBI Taxonomy" id="284811"/>
    <lineage>
        <taxon>Eukaryota</taxon>
        <taxon>Fungi</taxon>
        <taxon>Dikarya</taxon>
        <taxon>Ascomycota</taxon>
        <taxon>Saccharomycotina</taxon>
        <taxon>Saccharomycetes</taxon>
        <taxon>Saccharomycetales</taxon>
        <taxon>Saccharomycetaceae</taxon>
        <taxon>Eremothecium</taxon>
    </lineage>
</organism>
<protein>
    <recommendedName>
        <fullName>Biogenesis of lysosome-related organelles complex 1 subunit CNL1</fullName>
        <shortName>BLOC-1 subunit CNL1</shortName>
    </recommendedName>
    <alternativeName>
        <fullName>CNO-like protein 1</fullName>
    </alternativeName>
</protein>
<proteinExistence type="inferred from homology"/>
<feature type="chain" id="PRO_0000410641" description="Biogenesis of lysosome-related organelles complex 1 subunit CNL1">
    <location>
        <begin position="1"/>
        <end position="129"/>
    </location>
</feature>
<reference key="1">
    <citation type="journal article" date="2004" name="Science">
        <title>The Ashbya gossypii genome as a tool for mapping the ancient Saccharomyces cerevisiae genome.</title>
        <authorList>
            <person name="Dietrich F.S."/>
            <person name="Voegeli S."/>
            <person name="Brachat S."/>
            <person name="Lerch A."/>
            <person name="Gates K."/>
            <person name="Steiner S."/>
            <person name="Mohr C."/>
            <person name="Poehlmann R."/>
            <person name="Luedi P."/>
            <person name="Choi S."/>
            <person name="Wing R.A."/>
            <person name="Flavier A."/>
            <person name="Gaffney T.D."/>
            <person name="Philippsen P."/>
        </authorList>
    </citation>
    <scope>NUCLEOTIDE SEQUENCE [LARGE SCALE GENOMIC DNA]</scope>
    <source>
        <strain>ATCC 10895 / CBS 109.51 / FGSC 9923 / NRRL Y-1056</strain>
    </source>
</reference>
<reference key="2">
    <citation type="journal article" date="2013" name="G3 (Bethesda)">
        <title>Genomes of Ashbya fungi isolated from insects reveal four mating-type loci, numerous translocations, lack of transposons, and distinct gene duplications.</title>
        <authorList>
            <person name="Dietrich F.S."/>
            <person name="Voegeli S."/>
            <person name="Kuo S."/>
            <person name="Philippsen P."/>
        </authorList>
    </citation>
    <scope>GENOME REANNOTATION</scope>
    <source>
        <strain>ATCC 10895 / CBS 109.51 / FGSC 9923 / NRRL Y-1056</strain>
    </source>
</reference>
<keyword id="KW-0963">Cytoplasm</keyword>
<keyword id="KW-1185">Reference proteome</keyword>
<keyword id="KW-0813">Transport</keyword>
<sequence length="129" mass="14880">MVAEAGASIQAEDVNNDPFRVDQLILDYDYMLYRIKDHVASIHLATTELCRKQNQLVCTGIVEEIIDSNIKNVRELLTKCKELETYFEQLHAIDGIVSTFHERMDEIVKQYRDIKVHTDSASRDHVATK</sequence>
<gene>
    <name type="primary">CLN1</name>
    <name type="ordered locus">AER242C</name>
    <name type="ORF">AGOS_AER242C</name>
</gene>
<accession>Q756L2</accession>